<accession>O75006</accession>
<feature type="chain" id="PRO_0000118958" description="Exocyst complex component sec15">
    <location>
        <begin position="1"/>
        <end position="768"/>
    </location>
</feature>
<feature type="coiled-coil region" evidence="1">
    <location>
        <begin position="69"/>
        <end position="115"/>
    </location>
</feature>
<sequence length="768" mass="88550">MDIDVLEFVDKIASIESAGDTLDRLPQLISLACEKGQETQVYERLNELASKSAIRVEQLSAENNQDFSKSVNQLSVVRSELRSLQSLMADLNTDIQASGRDLQNMKQQLNSLSTSERFLTKYHNLVRSCMQVLHQVQYSQELLSKKQYLPTLRICSEISEVHLKRLDGLGMYSTIQQYIVTTKEAICSAVMEDLHEWLFSIRQKLPLVGKSCSQQIDEARRRWAREYKEDLVNLSSKTSISLELYLLEMMDFSPLDNEIVKISFEPLYICLQVHSYLGLLSSFRSSFERDRRRQQEFLAPKSLTTLDMAVVSEWLNSIAGFMIVEYYILQCIPNFRSYEEVQNIWTIICEKLVETILSVAFTEQSTTTIIKLKNQIVLLMHTMERFGFSVESLRNLCVELIDAFGGALILKHSVFFEEAFEKDVYAPMIVETQEEYDHYIAPYWNFPSEPFPRTMSFSKMCPLCCTTLSKFVRHFFMFLNDSVILATEVNEKAPRFYRRFILRSLVDRLKSLYPKLALSQMSQLVKNFYAFEDPLLQIEKSLVLNKPIHQIGAEASSSNNVKSTELLEGLANARKSALHEIFVKINLKIDDFLGLAEYDWTTTQVRKDVSGYLQEMVTYLQTMYLESLAGLPKHDKSYVYLETLDHLCTAMVDLLSDPSIRKVTTAAAEGFKLDVEYLESFAAQVPDQSIVNADSFIELRQCANLLLGDNMEEYLDTDKFMRDFNRLQPAVAIKFLERHINNYSANPLSNDRPKRRAIEILIATLKKR</sequence>
<name>SEC15_SCHPO</name>
<protein>
    <recommendedName>
        <fullName>Exocyst complex component sec15</fullName>
    </recommendedName>
</protein>
<organism>
    <name type="scientific">Schizosaccharomyces pombe (strain 972 / ATCC 24843)</name>
    <name type="common">Fission yeast</name>
    <dbReference type="NCBI Taxonomy" id="284812"/>
    <lineage>
        <taxon>Eukaryota</taxon>
        <taxon>Fungi</taxon>
        <taxon>Dikarya</taxon>
        <taxon>Ascomycota</taxon>
        <taxon>Taphrinomycotina</taxon>
        <taxon>Schizosaccharomycetes</taxon>
        <taxon>Schizosaccharomycetales</taxon>
        <taxon>Schizosaccharomycetaceae</taxon>
        <taxon>Schizosaccharomyces</taxon>
    </lineage>
</organism>
<reference key="1">
    <citation type="journal article" date="2002" name="Nature">
        <title>The genome sequence of Schizosaccharomyces pombe.</title>
        <authorList>
            <person name="Wood V."/>
            <person name="Gwilliam R."/>
            <person name="Rajandream M.A."/>
            <person name="Lyne M.H."/>
            <person name="Lyne R."/>
            <person name="Stewart A."/>
            <person name="Sgouros J.G."/>
            <person name="Peat N."/>
            <person name="Hayles J."/>
            <person name="Baker S.G."/>
            <person name="Basham D."/>
            <person name="Bowman S."/>
            <person name="Brooks K."/>
            <person name="Brown D."/>
            <person name="Brown S."/>
            <person name="Chillingworth T."/>
            <person name="Churcher C.M."/>
            <person name="Collins M."/>
            <person name="Connor R."/>
            <person name="Cronin A."/>
            <person name="Davis P."/>
            <person name="Feltwell T."/>
            <person name="Fraser A."/>
            <person name="Gentles S."/>
            <person name="Goble A."/>
            <person name="Hamlin N."/>
            <person name="Harris D.E."/>
            <person name="Hidalgo J."/>
            <person name="Hodgson G."/>
            <person name="Holroyd S."/>
            <person name="Hornsby T."/>
            <person name="Howarth S."/>
            <person name="Huckle E.J."/>
            <person name="Hunt S."/>
            <person name="Jagels K."/>
            <person name="James K.D."/>
            <person name="Jones L."/>
            <person name="Jones M."/>
            <person name="Leather S."/>
            <person name="McDonald S."/>
            <person name="McLean J."/>
            <person name="Mooney P."/>
            <person name="Moule S."/>
            <person name="Mungall K.L."/>
            <person name="Murphy L.D."/>
            <person name="Niblett D."/>
            <person name="Odell C."/>
            <person name="Oliver K."/>
            <person name="O'Neil S."/>
            <person name="Pearson D."/>
            <person name="Quail M.A."/>
            <person name="Rabbinowitsch E."/>
            <person name="Rutherford K.M."/>
            <person name="Rutter S."/>
            <person name="Saunders D."/>
            <person name="Seeger K."/>
            <person name="Sharp S."/>
            <person name="Skelton J."/>
            <person name="Simmonds M.N."/>
            <person name="Squares R."/>
            <person name="Squares S."/>
            <person name="Stevens K."/>
            <person name="Taylor K."/>
            <person name="Taylor R.G."/>
            <person name="Tivey A."/>
            <person name="Walsh S.V."/>
            <person name="Warren T."/>
            <person name="Whitehead S."/>
            <person name="Woodward J.R."/>
            <person name="Volckaert G."/>
            <person name="Aert R."/>
            <person name="Robben J."/>
            <person name="Grymonprez B."/>
            <person name="Weltjens I."/>
            <person name="Vanstreels E."/>
            <person name="Rieger M."/>
            <person name="Schaefer M."/>
            <person name="Mueller-Auer S."/>
            <person name="Gabel C."/>
            <person name="Fuchs M."/>
            <person name="Duesterhoeft A."/>
            <person name="Fritzc C."/>
            <person name="Holzer E."/>
            <person name="Moestl D."/>
            <person name="Hilbert H."/>
            <person name="Borzym K."/>
            <person name="Langer I."/>
            <person name="Beck A."/>
            <person name="Lehrach H."/>
            <person name="Reinhardt R."/>
            <person name="Pohl T.M."/>
            <person name="Eger P."/>
            <person name="Zimmermann W."/>
            <person name="Wedler H."/>
            <person name="Wambutt R."/>
            <person name="Purnelle B."/>
            <person name="Goffeau A."/>
            <person name="Cadieu E."/>
            <person name="Dreano S."/>
            <person name="Gloux S."/>
            <person name="Lelaure V."/>
            <person name="Mottier S."/>
            <person name="Galibert F."/>
            <person name="Aves S.J."/>
            <person name="Xiang Z."/>
            <person name="Hunt C."/>
            <person name="Moore K."/>
            <person name="Hurst S.M."/>
            <person name="Lucas M."/>
            <person name="Rochet M."/>
            <person name="Gaillardin C."/>
            <person name="Tallada V.A."/>
            <person name="Garzon A."/>
            <person name="Thode G."/>
            <person name="Daga R.R."/>
            <person name="Cruzado L."/>
            <person name="Jimenez J."/>
            <person name="Sanchez M."/>
            <person name="del Rey F."/>
            <person name="Benito J."/>
            <person name="Dominguez A."/>
            <person name="Revuelta J.L."/>
            <person name="Moreno S."/>
            <person name="Armstrong J."/>
            <person name="Forsburg S.L."/>
            <person name="Cerutti L."/>
            <person name="Lowe T."/>
            <person name="McCombie W.R."/>
            <person name="Paulsen I."/>
            <person name="Potashkin J."/>
            <person name="Shpakovski G.V."/>
            <person name="Ussery D."/>
            <person name="Barrell B.G."/>
            <person name="Nurse P."/>
        </authorList>
    </citation>
    <scope>NUCLEOTIDE SEQUENCE [LARGE SCALE GENOMIC DNA]</scope>
    <source>
        <strain>972 / ATCC 24843</strain>
    </source>
</reference>
<reference key="2">
    <citation type="journal article" date="2011" name="Science">
        <title>Comparative functional genomics of the fission yeasts.</title>
        <authorList>
            <person name="Rhind N."/>
            <person name="Chen Z."/>
            <person name="Yassour M."/>
            <person name="Thompson D.A."/>
            <person name="Haas B.J."/>
            <person name="Habib N."/>
            <person name="Wapinski I."/>
            <person name="Roy S."/>
            <person name="Lin M.F."/>
            <person name="Heiman D.I."/>
            <person name="Young S.K."/>
            <person name="Furuya K."/>
            <person name="Guo Y."/>
            <person name="Pidoux A."/>
            <person name="Chen H.M."/>
            <person name="Robbertse B."/>
            <person name="Goldberg J.M."/>
            <person name="Aoki K."/>
            <person name="Bayne E.H."/>
            <person name="Berlin A.M."/>
            <person name="Desjardins C.A."/>
            <person name="Dobbs E."/>
            <person name="Dukaj L."/>
            <person name="Fan L."/>
            <person name="FitzGerald M.G."/>
            <person name="French C."/>
            <person name="Gujja S."/>
            <person name="Hansen K."/>
            <person name="Keifenheim D."/>
            <person name="Levin J.Z."/>
            <person name="Mosher R.A."/>
            <person name="Mueller C.A."/>
            <person name="Pfiffner J."/>
            <person name="Priest M."/>
            <person name="Russ C."/>
            <person name="Smialowska A."/>
            <person name="Swoboda P."/>
            <person name="Sykes S.M."/>
            <person name="Vaughn M."/>
            <person name="Vengrova S."/>
            <person name="Yoder R."/>
            <person name="Zeng Q."/>
            <person name="Allshire R."/>
            <person name="Baulcombe D."/>
            <person name="Birren B.W."/>
            <person name="Brown W."/>
            <person name="Ekwall K."/>
            <person name="Kellis M."/>
            <person name="Leatherwood J."/>
            <person name="Levin H."/>
            <person name="Margalit H."/>
            <person name="Martienssen R."/>
            <person name="Nieduszynski C.A."/>
            <person name="Spatafora J.W."/>
            <person name="Friedman N."/>
            <person name="Dalgaard J.Z."/>
            <person name="Baumann P."/>
            <person name="Niki H."/>
            <person name="Regev A."/>
            <person name="Nusbaum C."/>
        </authorList>
    </citation>
    <scope>REVISION OF GENE MODEL</scope>
</reference>
<reference key="3">
    <citation type="journal article" date="2002" name="Mol. Biol. Cell">
        <title>The multiprotein exocyst complex is essential for cell separation in Schizosaccharomyces pombe.</title>
        <authorList>
            <person name="Wang H."/>
            <person name="Tang X."/>
            <person name="Liu J."/>
            <person name="Trautmann S."/>
            <person name="Balasundaram D."/>
            <person name="McCollum D."/>
            <person name="Balasubramanian M.K."/>
        </authorList>
    </citation>
    <scope>IDENTIFICATION</scope>
</reference>
<keyword id="KW-0175">Coiled coil</keyword>
<keyword id="KW-0268">Exocytosis</keyword>
<keyword id="KW-0653">Protein transport</keyword>
<keyword id="KW-1185">Reference proteome</keyword>
<keyword id="KW-0813">Transport</keyword>
<dbReference type="EMBL" id="CU329672">
    <property type="protein sequence ID" value="CAA20451.2"/>
    <property type="molecule type" value="Genomic_DNA"/>
</dbReference>
<dbReference type="PIR" id="T40841">
    <property type="entry name" value="T40841"/>
</dbReference>
<dbReference type="RefSeq" id="NP_587884.2">
    <property type="nucleotide sequence ID" value="NM_001022876.2"/>
</dbReference>
<dbReference type="SMR" id="O75006"/>
<dbReference type="FunCoup" id="O75006">
    <property type="interactions" value="364"/>
</dbReference>
<dbReference type="STRING" id="284812.O75006"/>
<dbReference type="iPTMnet" id="O75006"/>
<dbReference type="SwissPalm" id="O75006"/>
<dbReference type="PaxDb" id="4896-SPCC1183.01.1"/>
<dbReference type="EnsemblFungi" id="SPCC1183.01.1">
    <property type="protein sequence ID" value="SPCC1183.01.1:pep"/>
    <property type="gene ID" value="SPCC1183.01"/>
</dbReference>
<dbReference type="GeneID" id="2538937"/>
<dbReference type="KEGG" id="spo:2538937"/>
<dbReference type="PomBase" id="SPCC1183.01">
    <property type="gene designation" value="sec15"/>
</dbReference>
<dbReference type="VEuPathDB" id="FungiDB:SPCC1183.01"/>
<dbReference type="eggNOG" id="KOG2176">
    <property type="taxonomic scope" value="Eukaryota"/>
</dbReference>
<dbReference type="HOGENOM" id="CLU_009437_2_0_1"/>
<dbReference type="InParanoid" id="O75006"/>
<dbReference type="OMA" id="FPFHSEQ"/>
<dbReference type="PRO" id="PR:O75006"/>
<dbReference type="Proteomes" id="UP000002485">
    <property type="component" value="Chromosome III"/>
</dbReference>
<dbReference type="GO" id="GO:0000145">
    <property type="term" value="C:exocyst"/>
    <property type="evidence" value="ECO:0000318"/>
    <property type="project" value="GO_Central"/>
</dbReference>
<dbReference type="GO" id="GO:0006887">
    <property type="term" value="P:exocytosis"/>
    <property type="evidence" value="ECO:0000318"/>
    <property type="project" value="GO_Central"/>
</dbReference>
<dbReference type="GO" id="GO:0006893">
    <property type="term" value="P:Golgi to plasma membrane transport"/>
    <property type="evidence" value="ECO:0000318"/>
    <property type="project" value="GO_Central"/>
</dbReference>
<dbReference type="GO" id="GO:0006886">
    <property type="term" value="P:intracellular protein transport"/>
    <property type="evidence" value="ECO:0000303"/>
    <property type="project" value="PomBase"/>
</dbReference>
<dbReference type="GO" id="GO:0090522">
    <property type="term" value="P:vesicle tethering involved in exocytosis"/>
    <property type="evidence" value="ECO:0000305"/>
    <property type="project" value="PomBase"/>
</dbReference>
<dbReference type="FunFam" id="1.20.58.670:FF:000002">
    <property type="entry name" value="Exocyst complex component"/>
    <property type="match status" value="1"/>
</dbReference>
<dbReference type="Gene3D" id="1.20.58.670">
    <property type="entry name" value="Dsl1p vesicle tethering complex, Tip20p subunit, domain D"/>
    <property type="match status" value="1"/>
</dbReference>
<dbReference type="Gene3D" id="1.10.357.30">
    <property type="entry name" value="Exocyst complex subunit Sec15 C-terminal domain, N-terminal subdomain"/>
    <property type="match status" value="1"/>
</dbReference>
<dbReference type="InterPro" id="IPR007225">
    <property type="entry name" value="EXOC6/Sec15"/>
</dbReference>
<dbReference type="InterPro" id="IPR046361">
    <property type="entry name" value="EXOC6/Sec15_C"/>
</dbReference>
<dbReference type="InterPro" id="IPR042045">
    <property type="entry name" value="EXOC6/Sec15_C_dom1"/>
</dbReference>
<dbReference type="InterPro" id="IPR048359">
    <property type="entry name" value="EXOC6_Sec15_N"/>
</dbReference>
<dbReference type="InterPro" id="IPR042044">
    <property type="entry name" value="EXOC6PINT-1/Sec15/Tip20_C_dom2"/>
</dbReference>
<dbReference type="PANTHER" id="PTHR12702:SF0">
    <property type="entry name" value="EXOCYST COMPLEX COMPONENT 6"/>
    <property type="match status" value="1"/>
</dbReference>
<dbReference type="PANTHER" id="PTHR12702">
    <property type="entry name" value="SEC15"/>
    <property type="match status" value="1"/>
</dbReference>
<dbReference type="Pfam" id="PF20651">
    <property type="entry name" value="EXOC6_Sec15_N"/>
    <property type="match status" value="1"/>
</dbReference>
<dbReference type="Pfam" id="PF04091">
    <property type="entry name" value="Sec15_C"/>
    <property type="match status" value="1"/>
</dbReference>
<dbReference type="PIRSF" id="PIRSF025007">
    <property type="entry name" value="Sec15"/>
    <property type="match status" value="1"/>
</dbReference>
<evidence type="ECO:0000255" key="1"/>
<evidence type="ECO:0000305" key="2"/>
<comment type="function">
    <text>Component of the exocyst complex involved in the docking of exocytic vesicles with fusion sites on the plasma membrane.</text>
</comment>
<comment type="subunit">
    <text>The exocyst complex is composed of sec3, sec5, sec6, sec8, sec10, sec15, exo70 and exo84. Interacts with sec4.</text>
</comment>
<comment type="similarity">
    <text evidence="2">Belongs to the SEC15 family.</text>
</comment>
<proteinExistence type="inferred from homology"/>
<gene>
    <name type="primary">sec15</name>
    <name type="ORF">SPCC1183.01</name>
    <name type="ORF">SPCC1672.13</name>
</gene>